<evidence type="ECO:0000250" key="1"/>
<evidence type="ECO:0000269" key="2">
    <source>
    </source>
</evidence>
<evidence type="ECO:0000269" key="3">
    <source>
    </source>
</evidence>
<evidence type="ECO:0000269" key="4">
    <source>
    </source>
</evidence>
<evidence type="ECO:0000269" key="5">
    <source>
    </source>
</evidence>
<evidence type="ECO:0000269" key="6">
    <source>
    </source>
</evidence>
<evidence type="ECO:0000269" key="7">
    <source>
    </source>
</evidence>
<evidence type="ECO:0000269" key="8">
    <source>
    </source>
</evidence>
<evidence type="ECO:0000269" key="9">
    <source>
    </source>
</evidence>
<evidence type="ECO:0000269" key="10">
    <source>
    </source>
</evidence>
<evidence type="ECO:0000305" key="11"/>
<evidence type="ECO:0007829" key="12">
    <source>
        <dbReference type="PDB" id="1DGL"/>
    </source>
</evidence>
<evidence type="ECO:0007829" key="13">
    <source>
        <dbReference type="PDB" id="1VLN"/>
    </source>
</evidence>
<evidence type="ECO:0007829" key="14">
    <source>
        <dbReference type="PDB" id="2JEC"/>
    </source>
</evidence>
<evidence type="ECO:0007829" key="15">
    <source>
        <dbReference type="PDB" id="4Z8B"/>
    </source>
</evidence>
<reference key="1">
    <citation type="journal article" date="1984" name="Eur. J. Biochem.">
        <title>The complete amino acid sequence of the major alpha subunit of the lectin from the seeds of Dioclea grandiflora (Mart).</title>
        <authorList>
            <person name="Richardson M."/>
            <person name="Campos F.D.A.P."/>
            <person name="Moreira R.A."/>
            <person name="Ainouz I.L."/>
            <person name="Begbie R."/>
            <person name="Watt W.B."/>
            <person name="Pusztai A."/>
        </authorList>
    </citation>
    <scope>PROTEIN SEQUENCE</scope>
    <source>
        <tissue>Seed</tissue>
    </source>
</reference>
<reference key="2">
    <citation type="journal article" date="1999" name="Biochim. Biophys. Acta">
        <title>Molecular characterization and crystallization of Diocleinae lectins.</title>
        <authorList>
            <person name="Calvete J.J."/>
            <person name="Thole H.H."/>
            <person name="Raida M."/>
            <person name="Urbanke C."/>
            <person name="Romero A."/>
            <person name="Grangeiro T.B."/>
            <person name="Ramos M.V."/>
            <person name="Almeida da Rocha I.M."/>
            <person name="Guimaraes F.N."/>
            <person name="Cavada B.S."/>
        </authorList>
    </citation>
    <scope>PROTEIN SEQUENCE</scope>
    <scope>MASS SPECTROMETRY</scope>
    <source>
        <tissue>Seed</tissue>
    </source>
</reference>
<reference key="3">
    <citation type="journal article" date="1987" name="Phytochemistry">
        <title>The isolation and amino acid sequence of the beta- and gamma-subunits of the lectin from the seeds of Dioclea grandiflora.</title>
        <authorList>
            <person name="Ainouz I.L."/>
            <person name="Moreira R.A."/>
            <person name="Campos F.D.A.P."/>
            <person name="Richardson M."/>
            <person name="Begbie R."/>
            <person name="Stewart J.C."/>
            <person name="Watt W.B."/>
            <person name="Pusztai A."/>
        </authorList>
    </citation>
    <scope>PROTEIN SEQUENCE OF 1-23; 37-107; 110-151; 159-184 AND 201-237</scope>
    <source>
        <tissue>Seed</tissue>
    </source>
</reference>
<reference key="4">
    <citation type="journal article" date="1992" name="Immunol. Invest.">
        <title>Human lymphocyte stimulation by legume lectins from the Diocleae tribe.</title>
        <authorList>
            <person name="Barral-Netto M."/>
            <person name="Santos S.B."/>
            <person name="Barral A."/>
            <person name="Moreira L.I."/>
            <person name="Santos C.F."/>
            <person name="Moreira R.A."/>
            <person name="Oliveira J.T."/>
            <person name="Cavada B.S."/>
        </authorList>
    </citation>
    <scope>FUNCTION</scope>
</reference>
<reference key="5">
    <citation type="journal article" date="1994" name="Agents Actions">
        <title>Histamine release induced by glucose (mannose)-specific lectins isolated from Brazilian beans. Comparison with concanavalin A.</title>
        <authorList>
            <person name="Gomes J.C."/>
            <person name="Ferreira R.R."/>
            <person name="Cavada B.S."/>
            <person name="Moreira R.A."/>
            <person name="Oliveira J.T."/>
        </authorList>
    </citation>
    <scope>FUNCTION</scope>
    <scope>CALCIUM-BINDING</scope>
</reference>
<reference key="6">
    <citation type="journal article" date="1997" name="Mediators Inflamm.">
        <title>Anti-inflammatory effect of glucose-mannose binding lectins isolated from Brazilian beans.</title>
        <authorList>
            <person name="Assreuy A.M."/>
            <person name="Shibuya M.D."/>
            <person name="Martins G.J."/>
            <person name="De Souza M.L."/>
            <person name="Cavada B.S."/>
            <person name="Moreira R.A."/>
            <person name="Oliveira J.T."/>
            <person name="Ribeiro R.A."/>
            <person name="Flores C.A."/>
        </authorList>
    </citation>
    <scope>FUNCTION</scope>
</reference>
<reference key="7">
    <citation type="journal article" date="1998" name="J. Biol. Chem.">
        <title>Diocleinae lectins are a group of proteins with conserved binding sites for the core trimannoside of asparagine-linked oligosaccharides and differential specificities for complex carbohydrates.</title>
        <authorList>
            <person name="Dam T.K."/>
            <person name="Cavada B.S."/>
            <person name="Grangeiro T.B."/>
            <person name="Santos C.F."/>
            <person name="de Sousa F.A.M."/>
            <person name="Oscarson S."/>
            <person name="Brewer C.F."/>
        </authorList>
    </citation>
    <scope>FUNCTION</scope>
</reference>
<reference key="8">
    <citation type="journal article" date="2000" name="Biochemistry">
        <title>Demonstration of a conserved histidine and two water ligands at the Mn2+ site in Diocleinae lectins by pulsed EPR spectroscopy.</title>
        <authorList>
            <person name="Lee H.C."/>
            <person name="Goroncy A.K."/>
            <person name="Peisach J."/>
            <person name="Cavada B.S."/>
            <person name="Grangeiro T.B."/>
            <person name="Ramos M.V."/>
            <person name="Sampaio A.H."/>
            <person name="Dam T.K."/>
            <person name="Brewer C.F."/>
        </authorList>
    </citation>
    <scope>MANGANESE-BINDING</scope>
</reference>
<reference key="9">
    <citation type="journal article" date="2000" name="J. Biol. Chem.">
        <title>Thermodynamic binding studies of lectins from the diocleinae subtribe to deoxy analogs of the core trimannoside of asparagine-linked oligosaccharides.</title>
        <authorList>
            <person name="Dam T.K."/>
            <person name="Cavada B.S."/>
            <person name="Grangeiro T.B."/>
            <person name="Santos C.F."/>
            <person name="Ceccatto V.M."/>
            <person name="de Sousa F.A."/>
            <person name="Oscarson S."/>
            <person name="Brewer C.F."/>
        </authorList>
    </citation>
    <scope>FUNCTION</scope>
</reference>
<reference key="10">
    <citation type="journal article" date="2010" name="Bioresour. Technol.">
        <title>Toxicity of some glucose/mannose-binding lectins to Biomphalaria glabrata and Artemia salina.</title>
        <authorList>
            <person name="dos Santos A.F."/>
            <person name="Cavada B.S."/>
            <person name="da Rocha B.A."/>
            <person name="do Nascimento K.S."/>
            <person name="Sant'Ana A.E."/>
        </authorList>
    </citation>
    <scope>FUNCTION</scope>
    <scope>TOXIC DOSE</scope>
</reference>
<reference key="11">
    <citation type="journal article" date="1996" name="J. Struct. Biol.">
        <title>A triclinic crystal form of the lectin concanavalin A.</title>
        <authorList>
            <person name="Kanellopoulos P.N."/>
            <person name="Tucker P.A."/>
            <person name="Pavlou K."/>
            <person name="Agianian B."/>
            <person name="Hamodrakas S.J."/>
        </authorList>
    </citation>
    <scope>X-RAY CRYSTALLOGRAPHY (2.4 ANGSTROMS) IN COMPLEX WITH CALCIUM AND MANGANESE IONS</scope>
</reference>
<reference key="12">
    <citation type="journal article" date="1998" name="J. Biol. Chem.">
        <title>Crystal structure of the lectin from Dioclea grandiflora complexed with core trimannoside of asparagine-linked carbohydrates.</title>
        <authorList>
            <person name="Rozwarski D.A."/>
            <person name="Swami B.M."/>
            <person name="Brewer C.F."/>
            <person name="Sacchettini J.C."/>
        </authorList>
    </citation>
    <scope>X-RAY CRYSTALLOGRAPHY (2.4 ANGSTROMS) IN COMPLEX WITH CARBOHYDRATE; CALCIUM AND MANGANESE IONS</scope>
</reference>
<proteinExistence type="evidence at protein level"/>
<sequence>ADTIVAVELDSYPNTDIGDPNYPHIGIDIKSIRSKSTARWNMQTGKVGTVHISYNSVAKRLSAVVSYSGSSSTTVSYDVDLNNVLPEWVRVGLSATTGLYKETNTILSWSFTSKLKTNSIADENSLHFSFHKFSQNPKDLILQGDAFTDSDGNLELTKVSSSGDPQGNSVGRALFYAPVHIWESSAVVASFDATFTFLIKSPDREPADGITFFIANTDTSIPSGSGGRLLGLFPDAN</sequence>
<protein>
    <recommendedName>
        <fullName>Lectin alpha chain</fullName>
    </recommendedName>
    <component>
        <recommendedName>
            <fullName>Lectin beta chain</fullName>
        </recommendedName>
    </component>
    <component>
        <recommendedName>
            <fullName>Lectin gamma chain</fullName>
        </recommendedName>
    </component>
</protein>
<accession>P08902</accession>
<organism>
    <name type="scientific">Dioclea grandiflora</name>
    <name type="common">Mucana</name>
    <dbReference type="NCBI Taxonomy" id="3837"/>
    <lineage>
        <taxon>Eukaryota</taxon>
        <taxon>Viridiplantae</taxon>
        <taxon>Streptophyta</taxon>
        <taxon>Embryophyta</taxon>
        <taxon>Tracheophyta</taxon>
        <taxon>Spermatophyta</taxon>
        <taxon>Magnoliopsida</taxon>
        <taxon>eudicotyledons</taxon>
        <taxon>Gunneridae</taxon>
        <taxon>Pentapetalae</taxon>
        <taxon>rosids</taxon>
        <taxon>fabids</taxon>
        <taxon>Fabales</taxon>
        <taxon>Fabaceae</taxon>
        <taxon>Papilionoideae</taxon>
        <taxon>50 kb inversion clade</taxon>
        <taxon>NPAAA clade</taxon>
        <taxon>indigoferoid/millettioid clade</taxon>
        <taxon>Phaseoleae</taxon>
        <taxon>Macropsychanthus</taxon>
    </lineage>
</organism>
<keyword id="KW-0002">3D-structure</keyword>
<keyword id="KW-0106">Calcium</keyword>
<keyword id="KW-0903">Direct protein sequencing</keyword>
<keyword id="KW-0430">Lectin</keyword>
<keyword id="KW-0464">Manganese</keyword>
<keyword id="KW-0465">Mannose-binding</keyword>
<keyword id="KW-0479">Metal-binding</keyword>
<keyword id="KW-0800">Toxin</keyword>
<feature type="chain" id="PRO_0000017597" description="Lectin alpha chain">
    <location>
        <begin position="1"/>
        <end position="237"/>
    </location>
</feature>
<feature type="chain" id="PRO_0000017598" description="Lectin beta chain">
    <location>
        <begin position="1"/>
        <end position="118"/>
    </location>
</feature>
<feature type="chain" id="PRO_0000017599" description="Lectin gamma chain">
    <location>
        <begin position="119"/>
        <end position="237"/>
    </location>
</feature>
<feature type="binding site">
    <location>
        <position position="8"/>
    </location>
    <ligand>
        <name>Mn(2+)</name>
        <dbReference type="ChEBI" id="CHEBI:29035"/>
    </ligand>
</feature>
<feature type="binding site" evidence="8 10">
    <location>
        <position position="10"/>
    </location>
    <ligand>
        <name>Ca(2+)</name>
        <dbReference type="ChEBI" id="CHEBI:29108"/>
    </ligand>
</feature>
<feature type="binding site">
    <location>
        <position position="10"/>
    </location>
    <ligand>
        <name>Mn(2+)</name>
        <dbReference type="ChEBI" id="CHEBI:29035"/>
    </ligand>
</feature>
<feature type="binding site" evidence="10">
    <location>
        <position position="12"/>
    </location>
    <ligand>
        <name>a carbohydrate</name>
        <dbReference type="ChEBI" id="CHEBI:16646"/>
    </ligand>
</feature>
<feature type="binding site" evidence="8 10">
    <location>
        <position position="12"/>
    </location>
    <ligand>
        <name>Ca(2+)</name>
        <dbReference type="ChEBI" id="CHEBI:29108"/>
    </ligand>
</feature>
<feature type="binding site" evidence="8 10">
    <location>
        <position position="14"/>
    </location>
    <ligand>
        <name>Ca(2+)</name>
        <dbReference type="ChEBI" id="CHEBI:29108"/>
    </ligand>
</feature>
<feature type="binding site" evidence="8 10">
    <location>
        <position position="19"/>
    </location>
    <ligand>
        <name>Ca(2+)</name>
        <dbReference type="ChEBI" id="CHEBI:29108"/>
    </ligand>
</feature>
<feature type="binding site">
    <location>
        <position position="19"/>
    </location>
    <ligand>
        <name>Mn(2+)</name>
        <dbReference type="ChEBI" id="CHEBI:29035"/>
    </ligand>
</feature>
<feature type="binding site">
    <location>
        <position position="24"/>
    </location>
    <ligand>
        <name>Mn(2+)</name>
        <dbReference type="ChEBI" id="CHEBI:29035"/>
    </ligand>
</feature>
<feature type="binding site" evidence="1">
    <location>
        <position position="34"/>
    </location>
    <ligand>
        <name>Mn(2+)</name>
        <dbReference type="ChEBI" id="CHEBI:29035"/>
    </ligand>
</feature>
<feature type="binding site">
    <location>
        <begin position="99"/>
        <end position="100"/>
    </location>
    <ligand>
        <name>a carbohydrate</name>
        <dbReference type="ChEBI" id="CHEBI:16646"/>
    </ligand>
</feature>
<feature type="binding site" evidence="1">
    <location>
        <position position="208"/>
    </location>
    <ligand>
        <name>Ca(2+)</name>
        <dbReference type="ChEBI" id="CHEBI:29108"/>
    </ligand>
</feature>
<feature type="binding site" evidence="10">
    <location>
        <position position="228"/>
    </location>
    <ligand>
        <name>a carbohydrate</name>
        <dbReference type="ChEBI" id="CHEBI:16646"/>
    </ligand>
</feature>
<feature type="sequence conflict" description="In Ref. 1; AA sequence and 3; AA sequence." evidence="11" ref="1 3">
    <original>D</original>
    <variation>N</variation>
    <location>
        <position position="10"/>
    </location>
</feature>
<feature type="sequence conflict" description="In Ref. 1; AA sequence." evidence="11" ref="1">
    <original>E</original>
    <variation>A</variation>
    <location>
        <position position="123"/>
    </location>
</feature>
<feature type="sequence conflict" description="In Ref. 1; AA sequence and 3; AA sequence." evidence="11" ref="1 3">
    <original>H</original>
    <variation>N</variation>
    <location>
        <position position="131"/>
    </location>
</feature>
<feature type="sequence conflict" description="In Ref. 1; AA sequence and 3; AA sequence." evidence="11" ref="1 3">
    <original>K</original>
    <variation>Q</variation>
    <location>
        <position position="132"/>
    </location>
</feature>
<feature type="sequence conflict" description="In Ref. 2; AA sequence." evidence="11" ref="2">
    <original>S</original>
    <variation>K</variation>
    <location>
        <position position="184"/>
    </location>
</feature>
<feature type="sequence conflict" description="In Ref. 1; AA sequence." evidence="11" ref="1">
    <original>T</original>
    <variation>I</variation>
    <location>
        <position position="196"/>
    </location>
</feature>
<feature type="sequence conflict" description="In Ref. 1; AA sequence." evidence="11" ref="1">
    <original>T</original>
    <variation>W</variation>
    <location>
        <position position="196"/>
    </location>
</feature>
<feature type="sequence conflict" description="In Ref. 1; AA sequence and 3; AA sequence." evidence="11" ref="1 3">
    <original>R</original>
    <variation>H</variation>
    <location>
        <position position="204"/>
    </location>
</feature>
<feature type="strand" evidence="15">
    <location>
        <begin position="4"/>
        <end position="10"/>
    </location>
</feature>
<feature type="helix" evidence="15">
    <location>
        <begin position="15"/>
        <end position="17"/>
    </location>
</feature>
<feature type="strand" evidence="15">
    <location>
        <begin position="24"/>
        <end position="33"/>
    </location>
</feature>
<feature type="strand" evidence="15">
    <location>
        <begin position="35"/>
        <end position="39"/>
    </location>
</feature>
<feature type="strand" evidence="15">
    <location>
        <begin position="46"/>
        <end position="55"/>
    </location>
</feature>
<feature type="turn" evidence="15">
    <location>
        <begin position="56"/>
        <end position="59"/>
    </location>
</feature>
<feature type="strand" evidence="15">
    <location>
        <begin position="60"/>
        <end position="67"/>
    </location>
</feature>
<feature type="strand" evidence="15">
    <location>
        <begin position="73"/>
        <end position="78"/>
    </location>
</feature>
<feature type="helix" evidence="15">
    <location>
        <begin position="81"/>
        <end position="83"/>
    </location>
</feature>
<feature type="strand" evidence="15">
    <location>
        <begin position="87"/>
        <end position="96"/>
    </location>
</feature>
<feature type="strand" evidence="12">
    <location>
        <begin position="98"/>
        <end position="100"/>
    </location>
</feature>
<feature type="strand" evidence="15">
    <location>
        <begin position="105"/>
        <end position="116"/>
    </location>
</feature>
<feature type="strand" evidence="12">
    <location>
        <begin position="118"/>
        <end position="121"/>
    </location>
</feature>
<feature type="strand" evidence="15">
    <location>
        <begin position="124"/>
        <end position="132"/>
    </location>
</feature>
<feature type="strand" evidence="15">
    <location>
        <begin position="140"/>
        <end position="144"/>
    </location>
</feature>
<feature type="strand" evidence="13">
    <location>
        <begin position="150"/>
        <end position="152"/>
    </location>
</feature>
<feature type="strand" evidence="14">
    <location>
        <begin position="154"/>
        <end position="157"/>
    </location>
</feature>
<feature type="strand" evidence="15">
    <location>
        <begin position="161"/>
        <end position="163"/>
    </location>
</feature>
<feature type="strand" evidence="15">
    <location>
        <begin position="170"/>
        <end position="177"/>
    </location>
</feature>
<feature type="strand" evidence="15">
    <location>
        <begin position="187"/>
        <end position="198"/>
    </location>
</feature>
<feature type="strand" evidence="15">
    <location>
        <begin position="202"/>
        <end position="205"/>
    </location>
</feature>
<feature type="strand" evidence="15">
    <location>
        <begin position="209"/>
        <end position="216"/>
    </location>
</feature>
<feature type="helix" evidence="15">
    <location>
        <begin position="227"/>
        <end position="229"/>
    </location>
</feature>
<feature type="turn" evidence="15">
    <location>
        <begin position="230"/>
        <end position="232"/>
    </location>
</feature>
<name>LECA_DIOGR</name>
<comment type="function">
    <text evidence="3 4 5 6 7 9">D-mannose/D-glucose-binding lectin. Has anti-inflammatory activity in rats. Induces histamine release in mast cells from rat. Induces lymphocyte proliferation and IFNG production. Shows toxicity against the aquatic snail B.glabrata at concentrations higher than 50 ug/ml.</text>
</comment>
<comment type="subunit">
    <text evidence="8 10">Homotetramer.</text>
</comment>
<comment type="interaction">
    <interactant intactId="EBI-11191228">
        <id>P08902</id>
    </interactant>
    <interactant intactId="EBI-11191228">
        <id>P08902</id>
        <label>-</label>
    </interactant>
    <organismsDiffer>false</organismsDiffer>
    <experiments>3</experiments>
</comment>
<comment type="PTM">
    <text>The beta and gamma chains are produced by partial proteolytic processing of the lectin alpha chain by an asparaginyl endopeptidase. Mixture of 60% alpha lectin and 40% of its beta and gamma proteolytic fragments.</text>
</comment>
<comment type="mass spectrometry">
    <molecule>Lectin alpha chain</molecule>
</comment>
<comment type="mass spectrometry">
    <molecule>Lectin beta chain</molecule>
</comment>
<comment type="mass spectrometry">
    <molecule>Lectin gamma chain</molecule>
</comment>
<comment type="toxic dose">
    <text evidence="6">LD(50) is 2.52 ug/ml against the brine shrimp A.salina.</text>
</comment>
<comment type="miscellaneous">
    <text>Binds one manganese (or another transition metal) ion and one calcium ion. The metal ions are essential for the saccharide-binding and cell-agglutinating activities.</text>
</comment>
<comment type="miscellaneous">
    <text>Is being tested as a molluscicide with potential application in controlling schistosomiasis. The causative agent of schistosomiasis depends on freshwater snails of the genus Biomphalaria as hosts during its larval stages.</text>
</comment>
<comment type="similarity">
    <text evidence="11">Belongs to the leguminous lectin family.</text>
</comment>
<dbReference type="PIR" id="JU0176">
    <property type="entry name" value="JU0176"/>
</dbReference>
<dbReference type="PDB" id="1DGL">
    <property type="method" value="X-ray"/>
    <property type="resolution" value="2.40 A"/>
    <property type="chains" value="A/B=1-237"/>
</dbReference>
<dbReference type="PDB" id="1VLN">
    <property type="method" value="X-ray"/>
    <property type="resolution" value="2.40 A"/>
    <property type="chains" value="A/B/C/D/E/F/G/H=1-237"/>
</dbReference>
<dbReference type="PDB" id="2GDF">
    <property type="method" value="X-ray"/>
    <property type="resolution" value="2.40 A"/>
    <property type="chains" value="A/B/C/D=1-237"/>
</dbReference>
<dbReference type="PDB" id="2JE9">
    <property type="method" value="X-ray"/>
    <property type="resolution" value="2.10 A"/>
    <property type="chains" value="A/B/C/D=1-237"/>
</dbReference>
<dbReference type="PDB" id="2JEC">
    <property type="method" value="X-ray"/>
    <property type="resolution" value="2.00 A"/>
    <property type="chains" value="A/B/C/D=1-237"/>
</dbReference>
<dbReference type="PDB" id="4Z8B">
    <property type="method" value="X-ray"/>
    <property type="resolution" value="1.95 A"/>
    <property type="chains" value="A=1-237"/>
</dbReference>
<dbReference type="PDBsum" id="1DGL"/>
<dbReference type="PDBsum" id="1VLN"/>
<dbReference type="PDBsum" id="2GDF"/>
<dbReference type="PDBsum" id="2JE9"/>
<dbReference type="PDBsum" id="2JEC"/>
<dbReference type="PDBsum" id="4Z8B"/>
<dbReference type="SMR" id="P08902"/>
<dbReference type="MINT" id="P08902"/>
<dbReference type="UniLectin" id="P08902"/>
<dbReference type="EvolutionaryTrace" id="P08902"/>
<dbReference type="GO" id="GO:0030246">
    <property type="term" value="F:carbohydrate binding"/>
    <property type="evidence" value="ECO:0000314"/>
    <property type="project" value="UniProtKB"/>
</dbReference>
<dbReference type="GO" id="GO:0005537">
    <property type="term" value="F:D-mannose binding"/>
    <property type="evidence" value="ECO:0007669"/>
    <property type="project" value="UniProtKB-KW"/>
</dbReference>
<dbReference type="GO" id="GO:0042802">
    <property type="term" value="F:identical protein binding"/>
    <property type="evidence" value="ECO:0000353"/>
    <property type="project" value="IntAct"/>
</dbReference>
<dbReference type="GO" id="GO:0046872">
    <property type="term" value="F:metal ion binding"/>
    <property type="evidence" value="ECO:0007669"/>
    <property type="project" value="UniProtKB-KW"/>
</dbReference>
<dbReference type="GO" id="GO:0090729">
    <property type="term" value="F:toxin activity"/>
    <property type="evidence" value="ECO:0007669"/>
    <property type="project" value="UniProtKB-KW"/>
</dbReference>
<dbReference type="CDD" id="cd06899">
    <property type="entry name" value="lectin_legume_LecRK_Arcelin_ConA"/>
    <property type="match status" value="1"/>
</dbReference>
<dbReference type="FunFam" id="2.60.120.200:FF:000227">
    <property type="entry name" value="Concanavalin-A"/>
    <property type="match status" value="1"/>
</dbReference>
<dbReference type="Gene3D" id="2.60.120.200">
    <property type="match status" value="1"/>
</dbReference>
<dbReference type="InterPro" id="IPR013320">
    <property type="entry name" value="ConA-like_dom_sf"/>
</dbReference>
<dbReference type="InterPro" id="IPR000985">
    <property type="entry name" value="Lectin_LegA_CS"/>
</dbReference>
<dbReference type="InterPro" id="IPR019825">
    <property type="entry name" value="Lectin_legB_Mn/Ca_BS"/>
</dbReference>
<dbReference type="InterPro" id="IPR001220">
    <property type="entry name" value="Legume_lectin_dom"/>
</dbReference>
<dbReference type="InterPro" id="IPR050258">
    <property type="entry name" value="Leguminous_Lectin"/>
</dbReference>
<dbReference type="PANTHER" id="PTHR32401">
    <property type="entry name" value="CONCANAVALIN A-LIKE LECTIN FAMILY PROTEIN"/>
    <property type="match status" value="1"/>
</dbReference>
<dbReference type="PANTHER" id="PTHR32401:SF47">
    <property type="entry name" value="LEGUME LECTIN DOMAIN-CONTAINING PROTEIN"/>
    <property type="match status" value="1"/>
</dbReference>
<dbReference type="Pfam" id="PF00139">
    <property type="entry name" value="Lectin_legB"/>
    <property type="match status" value="2"/>
</dbReference>
<dbReference type="SUPFAM" id="SSF49899">
    <property type="entry name" value="Concanavalin A-like lectins/glucanases"/>
    <property type="match status" value="1"/>
</dbReference>
<dbReference type="PROSITE" id="PS00308">
    <property type="entry name" value="LECTIN_LEGUME_ALPHA"/>
    <property type="match status" value="1"/>
</dbReference>
<dbReference type="PROSITE" id="PS00307">
    <property type="entry name" value="LECTIN_LEGUME_BETA"/>
    <property type="match status" value="1"/>
</dbReference>